<name>RS15_NEOSM</name>
<feature type="chain" id="PRO_0000255509" description="Small ribosomal subunit protein uS15">
    <location>
        <begin position="1"/>
        <end position="86"/>
    </location>
</feature>
<gene>
    <name evidence="1" type="primary">rpsO</name>
    <name type="ordered locus">NSE_0058</name>
</gene>
<keyword id="KW-0687">Ribonucleoprotein</keyword>
<keyword id="KW-0689">Ribosomal protein</keyword>
<keyword id="KW-0694">RNA-binding</keyword>
<keyword id="KW-0699">rRNA-binding</keyword>
<dbReference type="EMBL" id="CP000237">
    <property type="protein sequence ID" value="ABD46059.1"/>
    <property type="molecule type" value="Genomic_DNA"/>
</dbReference>
<dbReference type="RefSeq" id="WP_011451465.1">
    <property type="nucleotide sequence ID" value="NC_007798.1"/>
</dbReference>
<dbReference type="SMR" id="Q2GEY7"/>
<dbReference type="STRING" id="222891.NSE_0058"/>
<dbReference type="KEGG" id="nse:NSE_0058"/>
<dbReference type="eggNOG" id="COG0184">
    <property type="taxonomic scope" value="Bacteria"/>
</dbReference>
<dbReference type="HOGENOM" id="CLU_148518_0_1_5"/>
<dbReference type="OrthoDB" id="9799262at2"/>
<dbReference type="Proteomes" id="UP000001942">
    <property type="component" value="Chromosome"/>
</dbReference>
<dbReference type="GO" id="GO:0022627">
    <property type="term" value="C:cytosolic small ribosomal subunit"/>
    <property type="evidence" value="ECO:0007669"/>
    <property type="project" value="TreeGrafter"/>
</dbReference>
<dbReference type="GO" id="GO:0019843">
    <property type="term" value="F:rRNA binding"/>
    <property type="evidence" value="ECO:0007669"/>
    <property type="project" value="UniProtKB-UniRule"/>
</dbReference>
<dbReference type="GO" id="GO:0003735">
    <property type="term" value="F:structural constituent of ribosome"/>
    <property type="evidence" value="ECO:0007669"/>
    <property type="project" value="InterPro"/>
</dbReference>
<dbReference type="GO" id="GO:0006412">
    <property type="term" value="P:translation"/>
    <property type="evidence" value="ECO:0007669"/>
    <property type="project" value="UniProtKB-UniRule"/>
</dbReference>
<dbReference type="CDD" id="cd00353">
    <property type="entry name" value="Ribosomal_S15p_S13e"/>
    <property type="match status" value="1"/>
</dbReference>
<dbReference type="FunFam" id="1.10.287.10:FF:000002">
    <property type="entry name" value="30S ribosomal protein S15"/>
    <property type="match status" value="1"/>
</dbReference>
<dbReference type="Gene3D" id="6.10.250.3130">
    <property type="match status" value="1"/>
</dbReference>
<dbReference type="Gene3D" id="1.10.287.10">
    <property type="entry name" value="S15/NS1, RNA-binding"/>
    <property type="match status" value="1"/>
</dbReference>
<dbReference type="HAMAP" id="MF_01343_B">
    <property type="entry name" value="Ribosomal_uS15_B"/>
    <property type="match status" value="1"/>
</dbReference>
<dbReference type="InterPro" id="IPR000589">
    <property type="entry name" value="Ribosomal_uS15"/>
</dbReference>
<dbReference type="InterPro" id="IPR005290">
    <property type="entry name" value="Ribosomal_uS15_bac-type"/>
</dbReference>
<dbReference type="InterPro" id="IPR009068">
    <property type="entry name" value="uS15_NS1_RNA-bd_sf"/>
</dbReference>
<dbReference type="NCBIfam" id="TIGR00952">
    <property type="entry name" value="S15_bact"/>
    <property type="match status" value="1"/>
</dbReference>
<dbReference type="PANTHER" id="PTHR23321">
    <property type="entry name" value="RIBOSOMAL PROTEIN S15, BACTERIAL AND ORGANELLAR"/>
    <property type="match status" value="1"/>
</dbReference>
<dbReference type="PANTHER" id="PTHR23321:SF26">
    <property type="entry name" value="SMALL RIBOSOMAL SUBUNIT PROTEIN US15M"/>
    <property type="match status" value="1"/>
</dbReference>
<dbReference type="Pfam" id="PF00312">
    <property type="entry name" value="Ribosomal_S15"/>
    <property type="match status" value="1"/>
</dbReference>
<dbReference type="SMART" id="SM01387">
    <property type="entry name" value="Ribosomal_S15"/>
    <property type="match status" value="1"/>
</dbReference>
<dbReference type="SUPFAM" id="SSF47060">
    <property type="entry name" value="S15/NS1 RNA-binding domain"/>
    <property type="match status" value="1"/>
</dbReference>
<dbReference type="PROSITE" id="PS00362">
    <property type="entry name" value="RIBOSOMAL_S15"/>
    <property type="match status" value="1"/>
</dbReference>
<sequence>MVDEKAEVIKKFRTADNDTGSAFVQVALFTRRINNLTRHLQGFKKDYSSRLGLLKIISKRRRLLNYLAKNDCQGCKNLMEMLDIRK</sequence>
<reference key="1">
    <citation type="journal article" date="2006" name="PLoS Genet.">
        <title>Comparative genomics of emerging human ehrlichiosis agents.</title>
        <authorList>
            <person name="Dunning Hotopp J.C."/>
            <person name="Lin M."/>
            <person name="Madupu R."/>
            <person name="Crabtree J."/>
            <person name="Angiuoli S.V."/>
            <person name="Eisen J.A."/>
            <person name="Seshadri R."/>
            <person name="Ren Q."/>
            <person name="Wu M."/>
            <person name="Utterback T.R."/>
            <person name="Smith S."/>
            <person name="Lewis M."/>
            <person name="Khouri H."/>
            <person name="Zhang C."/>
            <person name="Niu H."/>
            <person name="Lin Q."/>
            <person name="Ohashi N."/>
            <person name="Zhi N."/>
            <person name="Nelson W.C."/>
            <person name="Brinkac L.M."/>
            <person name="Dodson R.J."/>
            <person name="Rosovitz M.J."/>
            <person name="Sundaram J.P."/>
            <person name="Daugherty S.C."/>
            <person name="Davidsen T."/>
            <person name="Durkin A.S."/>
            <person name="Gwinn M.L."/>
            <person name="Haft D.H."/>
            <person name="Selengut J.D."/>
            <person name="Sullivan S.A."/>
            <person name="Zafar N."/>
            <person name="Zhou L."/>
            <person name="Benahmed F."/>
            <person name="Forberger H."/>
            <person name="Halpin R."/>
            <person name="Mulligan S."/>
            <person name="Robinson J."/>
            <person name="White O."/>
            <person name="Rikihisa Y."/>
            <person name="Tettelin H."/>
        </authorList>
    </citation>
    <scope>NUCLEOTIDE SEQUENCE [LARGE SCALE GENOMIC DNA]</scope>
    <source>
        <strain>ATCC VR-367 / Miyayama</strain>
    </source>
</reference>
<comment type="function">
    <text evidence="1">One of the primary rRNA binding proteins, it binds directly to 16S rRNA where it helps nucleate assembly of the platform of the 30S subunit by binding and bridging several RNA helices of the 16S rRNA.</text>
</comment>
<comment type="function">
    <text evidence="1">Forms an intersubunit bridge (bridge B4) with the 23S rRNA of the 50S subunit in the ribosome.</text>
</comment>
<comment type="subunit">
    <text evidence="1">Part of the 30S ribosomal subunit. Forms a bridge to the 50S subunit in the 70S ribosome, contacting the 23S rRNA.</text>
</comment>
<comment type="similarity">
    <text evidence="1">Belongs to the universal ribosomal protein uS15 family.</text>
</comment>
<protein>
    <recommendedName>
        <fullName evidence="1">Small ribosomal subunit protein uS15</fullName>
    </recommendedName>
    <alternativeName>
        <fullName evidence="2">30S ribosomal protein S15</fullName>
    </alternativeName>
</protein>
<organism>
    <name type="scientific">Neorickettsia sennetsu (strain ATCC VR-367 / Miyayama)</name>
    <name type="common">Ehrlichia sennetsu</name>
    <dbReference type="NCBI Taxonomy" id="222891"/>
    <lineage>
        <taxon>Bacteria</taxon>
        <taxon>Pseudomonadati</taxon>
        <taxon>Pseudomonadota</taxon>
        <taxon>Alphaproteobacteria</taxon>
        <taxon>Rickettsiales</taxon>
        <taxon>Anaplasmataceae</taxon>
        <taxon>Neorickettsia</taxon>
    </lineage>
</organism>
<proteinExistence type="inferred from homology"/>
<accession>Q2GEY7</accession>
<evidence type="ECO:0000255" key="1">
    <source>
        <dbReference type="HAMAP-Rule" id="MF_01343"/>
    </source>
</evidence>
<evidence type="ECO:0000305" key="2"/>